<comment type="function">
    <text evidence="4">Stimulates the growth of some tissues.</text>
</comment>
<comment type="subcellular location">
    <subcellularLocation>
        <location evidence="1">Secreted</location>
    </subcellularLocation>
</comment>
<name>GRFA_MYXVL</name>
<sequence length="85" mass="9629">MVPRDLVATLLCAMCIVQATMPSLDNYLYIIKRIKLCNDDYKNYCLNNGTCFTVALNNVSLNPFCACHINYVGSRCQFINLITIK</sequence>
<dbReference type="EMBL" id="M15806">
    <property type="protein sequence ID" value="AAA46626.1"/>
    <property type="molecule type" value="Genomic_DNA"/>
</dbReference>
<dbReference type="EMBL" id="AF170726">
    <property type="protein sequence ID" value="AAF14898.1"/>
    <property type="molecule type" value="Genomic_DNA"/>
</dbReference>
<dbReference type="PIR" id="A26131">
    <property type="entry name" value="EGVZM1"/>
</dbReference>
<dbReference type="RefSeq" id="NP_051724.1">
    <property type="nucleotide sequence ID" value="NC_001132.2"/>
</dbReference>
<dbReference type="SMR" id="P08072"/>
<dbReference type="GlyCosmos" id="P08072">
    <property type="glycosylation" value="2 sites, No reported glycans"/>
</dbReference>
<dbReference type="GeneID" id="932144"/>
<dbReference type="KEGG" id="vg:932144"/>
<dbReference type="Proteomes" id="UP000000867">
    <property type="component" value="Segment"/>
</dbReference>
<dbReference type="GO" id="GO:0005576">
    <property type="term" value="C:extracellular region"/>
    <property type="evidence" value="ECO:0007669"/>
    <property type="project" value="UniProtKB-SubCell"/>
</dbReference>
<dbReference type="GO" id="GO:0008083">
    <property type="term" value="F:growth factor activity"/>
    <property type="evidence" value="ECO:0007669"/>
    <property type="project" value="UniProtKB-KW"/>
</dbReference>
<dbReference type="Gene3D" id="2.10.25.10">
    <property type="entry name" value="Laminin"/>
    <property type="match status" value="1"/>
</dbReference>
<dbReference type="InterPro" id="IPR000742">
    <property type="entry name" value="EGF-like_dom"/>
</dbReference>
<dbReference type="Pfam" id="PF00008">
    <property type="entry name" value="EGF"/>
    <property type="match status" value="1"/>
</dbReference>
<dbReference type="PRINTS" id="PR00009">
    <property type="entry name" value="EGFTGF"/>
</dbReference>
<dbReference type="SUPFAM" id="SSF57196">
    <property type="entry name" value="EGF/Laminin"/>
    <property type="match status" value="1"/>
</dbReference>
<dbReference type="PROSITE" id="PS00022">
    <property type="entry name" value="EGF_1"/>
    <property type="match status" value="1"/>
</dbReference>
<dbReference type="PROSITE" id="PS50026">
    <property type="entry name" value="EGF_3"/>
    <property type="match status" value="1"/>
</dbReference>
<proteinExistence type="evidence at protein level"/>
<evidence type="ECO:0000250" key="1"/>
<evidence type="ECO:0000255" key="2"/>
<evidence type="ECO:0000255" key="3">
    <source>
        <dbReference type="PROSITE-ProRule" id="PRU00076"/>
    </source>
</evidence>
<evidence type="ECO:0000269" key="4">
    <source>
    </source>
</evidence>
<organismHost>
    <name type="scientific">Oryctolagus cuniculus</name>
    <name type="common">Rabbit</name>
    <dbReference type="NCBI Taxonomy" id="9986"/>
</organismHost>
<keyword id="KW-1015">Disulfide bond</keyword>
<keyword id="KW-0245">EGF-like domain</keyword>
<keyword id="KW-0325">Glycoprotein</keyword>
<keyword id="KW-0339">Growth factor</keyword>
<keyword id="KW-1185">Reference proteome</keyword>
<keyword id="KW-0964">Secreted</keyword>
<keyword id="KW-0732">Signal</keyword>
<organism>
    <name type="scientific">Myxoma virus (strain Lausanne)</name>
    <name type="common">MYXV</name>
    <dbReference type="NCBI Taxonomy" id="31530"/>
    <lineage>
        <taxon>Viruses</taxon>
        <taxon>Varidnaviria</taxon>
        <taxon>Bamfordvirae</taxon>
        <taxon>Nucleocytoviricota</taxon>
        <taxon>Pokkesviricetes</taxon>
        <taxon>Chitovirales</taxon>
        <taxon>Poxviridae</taxon>
        <taxon>Chordopoxvirinae</taxon>
        <taxon>Leporipoxvirus</taxon>
        <taxon>Myxoma virus</taxon>
    </lineage>
</organism>
<gene>
    <name type="primary">MGF</name>
    <name type="ordered locus">m010L</name>
</gene>
<feature type="signal peptide" evidence="2">
    <location>
        <begin position="1"/>
        <end position="19"/>
    </location>
</feature>
<feature type="chain" id="PRO_0000007603" description="Growth factor">
    <location>
        <begin position="20"/>
        <end position="85"/>
    </location>
</feature>
<feature type="domain" description="EGF-like" evidence="3">
    <location>
        <begin position="33"/>
        <end position="77"/>
    </location>
</feature>
<feature type="glycosylation site" description="N-linked (GlcNAc...) asparagine; by host" evidence="2">
    <location>
        <position position="48"/>
    </location>
</feature>
<feature type="glycosylation site" description="N-linked (GlcNAc...) asparagine; by host" evidence="2">
    <location>
        <position position="58"/>
    </location>
</feature>
<feature type="disulfide bond" evidence="3 4">
    <location>
        <begin position="37"/>
        <end position="51"/>
    </location>
</feature>
<feature type="disulfide bond" evidence="3 4">
    <location>
        <begin position="45"/>
        <end position="65"/>
    </location>
</feature>
<feature type="disulfide bond" evidence="3 4">
    <location>
        <begin position="67"/>
        <end position="76"/>
    </location>
</feature>
<protein>
    <recommendedName>
        <fullName>Growth factor</fullName>
    </recommendedName>
    <alternativeName>
        <fullName>Secreted epidermal growth factor-like</fullName>
    </alternativeName>
</protein>
<reference key="1">
    <citation type="journal article" date="1987" name="J. Virol.">
        <title>Mapping and sequencing of a gene from myxoma virus that is related to those encoding epidermal growth factor and transforming growth factor alpha.</title>
        <authorList>
            <person name="Upton C."/>
            <person name="Macen J.L."/>
            <person name="McFadden G."/>
        </authorList>
    </citation>
    <scope>NUCLEOTIDE SEQUENCE [GENOMIC DNA]</scope>
</reference>
<reference key="2">
    <citation type="journal article" date="1999" name="Virology">
        <title>The complete DNA sequence of myxoma virus.</title>
        <authorList>
            <person name="Cameron C."/>
            <person name="Hota-Mitchell S."/>
            <person name="Chen L."/>
            <person name="Barrett J.W."/>
            <person name="Cao J.-X."/>
            <person name="Macaulay C."/>
            <person name="Willer D.O."/>
            <person name="Evans D.H."/>
            <person name="McFadden G."/>
        </authorList>
    </citation>
    <scope>NUCLEOTIDE SEQUENCE [LARGE SCALE GENOMIC DNA]</scope>
</reference>
<reference key="3">
    <citation type="journal article" date="1991" name="Biochemistry">
        <title>Synthesis and structure-activity study of myxoma virus growth factor.</title>
        <authorList>
            <person name="Lin Y.-Z."/>
            <person name="Ke X.-H."/>
            <person name="Tam J.P."/>
        </authorList>
    </citation>
    <scope>SYNTHESIS OF 30-83</scope>
    <scope>DISULFIDE BONDS</scope>
    <scope>FUNCTION</scope>
</reference>
<accession>P08072</accession>